<evidence type="ECO:0000255" key="1">
    <source>
        <dbReference type="HAMAP-Rule" id="MF_01865"/>
    </source>
</evidence>
<evidence type="ECO:0000255" key="2">
    <source>
        <dbReference type="PROSITE-ProRule" id="PRU01266"/>
    </source>
</evidence>
<organism>
    <name type="scientific">Histophilus somni (strain 2336)</name>
    <name type="common">Haemophilus somnus</name>
    <dbReference type="NCBI Taxonomy" id="228400"/>
    <lineage>
        <taxon>Bacteria</taxon>
        <taxon>Pseudomonadati</taxon>
        <taxon>Pseudomonadota</taxon>
        <taxon>Gammaproteobacteria</taxon>
        <taxon>Pasteurellales</taxon>
        <taxon>Pasteurellaceae</taxon>
        <taxon>Histophilus</taxon>
    </lineage>
</organism>
<feature type="chain" id="PRO_0000374852" description="Ribosomal protein uS12 methylthiotransferase RimO">
    <location>
        <begin position="1"/>
        <end position="443"/>
    </location>
</feature>
<feature type="domain" description="MTTase N-terminal" evidence="1">
    <location>
        <begin position="5"/>
        <end position="115"/>
    </location>
</feature>
<feature type="domain" description="Radical SAM core" evidence="2">
    <location>
        <begin position="133"/>
        <end position="374"/>
    </location>
</feature>
<feature type="domain" description="TRAM" evidence="1">
    <location>
        <begin position="377"/>
        <end position="443"/>
    </location>
</feature>
<feature type="binding site" evidence="1">
    <location>
        <position position="14"/>
    </location>
    <ligand>
        <name>[4Fe-4S] cluster</name>
        <dbReference type="ChEBI" id="CHEBI:49883"/>
        <label>1</label>
    </ligand>
</feature>
<feature type="binding site" evidence="1">
    <location>
        <position position="50"/>
    </location>
    <ligand>
        <name>[4Fe-4S] cluster</name>
        <dbReference type="ChEBI" id="CHEBI:49883"/>
        <label>1</label>
    </ligand>
</feature>
<feature type="binding site" evidence="1">
    <location>
        <position position="79"/>
    </location>
    <ligand>
        <name>[4Fe-4S] cluster</name>
        <dbReference type="ChEBI" id="CHEBI:49883"/>
        <label>1</label>
    </ligand>
</feature>
<feature type="binding site" evidence="1">
    <location>
        <position position="147"/>
    </location>
    <ligand>
        <name>[4Fe-4S] cluster</name>
        <dbReference type="ChEBI" id="CHEBI:49883"/>
        <label>2</label>
        <note>4Fe-4S-S-AdoMet</note>
    </ligand>
</feature>
<feature type="binding site" evidence="1">
    <location>
        <position position="151"/>
    </location>
    <ligand>
        <name>[4Fe-4S] cluster</name>
        <dbReference type="ChEBI" id="CHEBI:49883"/>
        <label>2</label>
        <note>4Fe-4S-S-AdoMet</note>
    </ligand>
</feature>
<feature type="binding site" evidence="1">
    <location>
        <position position="154"/>
    </location>
    <ligand>
        <name>[4Fe-4S] cluster</name>
        <dbReference type="ChEBI" id="CHEBI:49883"/>
        <label>2</label>
        <note>4Fe-4S-S-AdoMet</note>
    </ligand>
</feature>
<sequence length="443" mass="49909">MSSSPNIGFISLGCPKNLVDSERILTELRSDGYNIISSYEGADLVIVNTCGFIDSAVQESLESIGEALENNGKVIVTGCLGAKENQIREIHPQVLEITGPHSYEAVMKHVHKYVPKPEYSPYTSLVPKQGIKLTPKHYAYLKISEGCDHRCTFCIIPSMRGDLDSRSIVHILDEAKRLVDAGVKEILVVSQDTSAYALDKKKENASKTVFWNGMPIKNDLITLCEKLGSLGAWVRLHYVYPYPHVDNLIPLMAEGKILPYLDIPLQHASPKILKMMKRPGSIERTLERIKKWREICPDLTLRSTFIVGFPGETEEDFQLLLDFLQEAQLDRVGCFKFSPVEGAVATDMEDQIPEEIKEERFHRFMQLQQKISAERLRQKIGRTLSVIIDEIDEEGIIGRTMADAPEIDGVVYVDNFSKVEVKLGQIINVTITNADEYDLWGEI</sequence>
<proteinExistence type="inferred from homology"/>
<dbReference type="EC" id="2.8.4.4" evidence="1"/>
<dbReference type="EMBL" id="CP000947">
    <property type="protein sequence ID" value="ACA32239.1"/>
    <property type="molecule type" value="Genomic_DNA"/>
</dbReference>
<dbReference type="RefSeq" id="WP_012341417.1">
    <property type="nucleotide sequence ID" value="NC_010519.1"/>
</dbReference>
<dbReference type="SMR" id="B0US28"/>
<dbReference type="STRING" id="228400.HSM_0587"/>
<dbReference type="GeneID" id="31486872"/>
<dbReference type="KEGG" id="hsm:HSM_0587"/>
<dbReference type="HOGENOM" id="CLU_018697_0_0_6"/>
<dbReference type="GO" id="GO:0005829">
    <property type="term" value="C:cytosol"/>
    <property type="evidence" value="ECO:0007669"/>
    <property type="project" value="TreeGrafter"/>
</dbReference>
<dbReference type="GO" id="GO:0051539">
    <property type="term" value="F:4 iron, 4 sulfur cluster binding"/>
    <property type="evidence" value="ECO:0007669"/>
    <property type="project" value="UniProtKB-UniRule"/>
</dbReference>
<dbReference type="GO" id="GO:0035599">
    <property type="term" value="F:aspartic acid methylthiotransferase activity"/>
    <property type="evidence" value="ECO:0007669"/>
    <property type="project" value="TreeGrafter"/>
</dbReference>
<dbReference type="GO" id="GO:0046872">
    <property type="term" value="F:metal ion binding"/>
    <property type="evidence" value="ECO:0007669"/>
    <property type="project" value="UniProtKB-KW"/>
</dbReference>
<dbReference type="GO" id="GO:0103039">
    <property type="term" value="F:protein methylthiotransferase activity"/>
    <property type="evidence" value="ECO:0007669"/>
    <property type="project" value="UniProtKB-EC"/>
</dbReference>
<dbReference type="GO" id="GO:0006400">
    <property type="term" value="P:tRNA modification"/>
    <property type="evidence" value="ECO:0007669"/>
    <property type="project" value="InterPro"/>
</dbReference>
<dbReference type="CDD" id="cd01335">
    <property type="entry name" value="Radical_SAM"/>
    <property type="match status" value="1"/>
</dbReference>
<dbReference type="FunFam" id="2.40.50.140:FF:000060">
    <property type="entry name" value="Ribosomal protein S12 methylthiotransferase RimO"/>
    <property type="match status" value="1"/>
</dbReference>
<dbReference type="FunFam" id="3.40.50.12160:FF:000002">
    <property type="entry name" value="Ribosomal protein S12 methylthiotransferase RimO"/>
    <property type="match status" value="1"/>
</dbReference>
<dbReference type="FunFam" id="3.80.30.20:FF:000001">
    <property type="entry name" value="tRNA-2-methylthio-N(6)-dimethylallyladenosine synthase 2"/>
    <property type="match status" value="1"/>
</dbReference>
<dbReference type="Gene3D" id="3.40.50.12160">
    <property type="entry name" value="Methylthiotransferase, N-terminal domain"/>
    <property type="match status" value="1"/>
</dbReference>
<dbReference type="Gene3D" id="2.40.50.140">
    <property type="entry name" value="Nucleic acid-binding proteins"/>
    <property type="match status" value="1"/>
</dbReference>
<dbReference type="Gene3D" id="3.80.30.20">
    <property type="entry name" value="tm_1862 like domain"/>
    <property type="match status" value="1"/>
</dbReference>
<dbReference type="HAMAP" id="MF_01865">
    <property type="entry name" value="MTTase_RimO"/>
    <property type="match status" value="1"/>
</dbReference>
<dbReference type="InterPro" id="IPR006638">
    <property type="entry name" value="Elp3/MiaA/NifB-like_rSAM"/>
</dbReference>
<dbReference type="InterPro" id="IPR005839">
    <property type="entry name" value="Methylthiotransferase"/>
</dbReference>
<dbReference type="InterPro" id="IPR020612">
    <property type="entry name" value="Methylthiotransferase_CS"/>
</dbReference>
<dbReference type="InterPro" id="IPR013848">
    <property type="entry name" value="Methylthiotransferase_N"/>
</dbReference>
<dbReference type="InterPro" id="IPR038135">
    <property type="entry name" value="Methylthiotransferase_N_sf"/>
</dbReference>
<dbReference type="InterPro" id="IPR012340">
    <property type="entry name" value="NA-bd_OB-fold"/>
</dbReference>
<dbReference type="InterPro" id="IPR005840">
    <property type="entry name" value="Ribosomal_uS12_MeSTrfase_RimO"/>
</dbReference>
<dbReference type="InterPro" id="IPR007197">
    <property type="entry name" value="rSAM"/>
</dbReference>
<dbReference type="InterPro" id="IPR023404">
    <property type="entry name" value="rSAM_horseshoe"/>
</dbReference>
<dbReference type="InterPro" id="IPR002792">
    <property type="entry name" value="TRAM_dom"/>
</dbReference>
<dbReference type="NCBIfam" id="TIGR01125">
    <property type="entry name" value="30S ribosomal protein S12 methylthiotransferase RimO"/>
    <property type="match status" value="1"/>
</dbReference>
<dbReference type="NCBIfam" id="TIGR00089">
    <property type="entry name" value="MiaB/RimO family radical SAM methylthiotransferase"/>
    <property type="match status" value="1"/>
</dbReference>
<dbReference type="PANTHER" id="PTHR43837">
    <property type="entry name" value="RIBOSOMAL PROTEIN S12 METHYLTHIOTRANSFERASE RIMO"/>
    <property type="match status" value="1"/>
</dbReference>
<dbReference type="PANTHER" id="PTHR43837:SF1">
    <property type="entry name" value="RIBOSOMAL PROTEIN US12 METHYLTHIOTRANSFERASE RIMO"/>
    <property type="match status" value="1"/>
</dbReference>
<dbReference type="Pfam" id="PF04055">
    <property type="entry name" value="Radical_SAM"/>
    <property type="match status" value="1"/>
</dbReference>
<dbReference type="Pfam" id="PF18693">
    <property type="entry name" value="TRAM_2"/>
    <property type="match status" value="1"/>
</dbReference>
<dbReference type="Pfam" id="PF00919">
    <property type="entry name" value="UPF0004"/>
    <property type="match status" value="1"/>
</dbReference>
<dbReference type="SFLD" id="SFLDG01082">
    <property type="entry name" value="B12-binding_domain_containing"/>
    <property type="match status" value="1"/>
</dbReference>
<dbReference type="SFLD" id="SFLDS00029">
    <property type="entry name" value="Radical_SAM"/>
    <property type="match status" value="1"/>
</dbReference>
<dbReference type="SFLD" id="SFLDF00274">
    <property type="entry name" value="ribosomal_protein_S12_methylth"/>
    <property type="match status" value="1"/>
</dbReference>
<dbReference type="SMART" id="SM00729">
    <property type="entry name" value="Elp3"/>
    <property type="match status" value="1"/>
</dbReference>
<dbReference type="SUPFAM" id="SSF102114">
    <property type="entry name" value="Radical SAM enzymes"/>
    <property type="match status" value="1"/>
</dbReference>
<dbReference type="PROSITE" id="PS51449">
    <property type="entry name" value="MTTASE_N"/>
    <property type="match status" value="1"/>
</dbReference>
<dbReference type="PROSITE" id="PS01278">
    <property type="entry name" value="MTTASE_RADICAL"/>
    <property type="match status" value="1"/>
</dbReference>
<dbReference type="PROSITE" id="PS51918">
    <property type="entry name" value="RADICAL_SAM"/>
    <property type="match status" value="1"/>
</dbReference>
<dbReference type="PROSITE" id="PS50926">
    <property type="entry name" value="TRAM"/>
    <property type="match status" value="1"/>
</dbReference>
<protein>
    <recommendedName>
        <fullName evidence="1">Ribosomal protein uS12 methylthiotransferase RimO</fullName>
        <shortName evidence="1">uS12 MTTase</shortName>
        <shortName evidence="1">uS12 methylthiotransferase</shortName>
        <ecNumber evidence="1">2.8.4.4</ecNumber>
    </recommendedName>
    <alternativeName>
        <fullName evidence="1">Ribosomal protein uS12 (aspartate-C(3))-methylthiotransferase</fullName>
    </alternativeName>
    <alternativeName>
        <fullName evidence="1">Ribosome maturation factor RimO</fullName>
    </alternativeName>
</protein>
<name>RIMO_HISS2</name>
<accession>B0US28</accession>
<gene>
    <name evidence="1" type="primary">rimO</name>
    <name type="ordered locus">HSM_0587</name>
</gene>
<comment type="function">
    <text evidence="1">Catalyzes the methylthiolation of an aspartic acid residue of ribosomal protein uS12.</text>
</comment>
<comment type="catalytic activity">
    <reaction evidence="1">
        <text>L-aspartate(89)-[ribosomal protein uS12]-hydrogen + (sulfur carrier)-SH + AH2 + 2 S-adenosyl-L-methionine = 3-methylsulfanyl-L-aspartate(89)-[ribosomal protein uS12]-hydrogen + (sulfur carrier)-H + 5'-deoxyadenosine + L-methionine + A + S-adenosyl-L-homocysteine + 2 H(+)</text>
        <dbReference type="Rhea" id="RHEA:37087"/>
        <dbReference type="Rhea" id="RHEA-COMP:10460"/>
        <dbReference type="Rhea" id="RHEA-COMP:10461"/>
        <dbReference type="Rhea" id="RHEA-COMP:14737"/>
        <dbReference type="Rhea" id="RHEA-COMP:14739"/>
        <dbReference type="ChEBI" id="CHEBI:13193"/>
        <dbReference type="ChEBI" id="CHEBI:15378"/>
        <dbReference type="ChEBI" id="CHEBI:17319"/>
        <dbReference type="ChEBI" id="CHEBI:17499"/>
        <dbReference type="ChEBI" id="CHEBI:29917"/>
        <dbReference type="ChEBI" id="CHEBI:29961"/>
        <dbReference type="ChEBI" id="CHEBI:57844"/>
        <dbReference type="ChEBI" id="CHEBI:57856"/>
        <dbReference type="ChEBI" id="CHEBI:59789"/>
        <dbReference type="ChEBI" id="CHEBI:64428"/>
        <dbReference type="ChEBI" id="CHEBI:73599"/>
        <dbReference type="EC" id="2.8.4.4"/>
    </reaction>
</comment>
<comment type="cofactor">
    <cofactor evidence="1">
        <name>[4Fe-4S] cluster</name>
        <dbReference type="ChEBI" id="CHEBI:49883"/>
    </cofactor>
    <text evidence="1">Binds 2 [4Fe-4S] clusters. One cluster is coordinated with 3 cysteines and an exchangeable S-adenosyl-L-methionine.</text>
</comment>
<comment type="subcellular location">
    <subcellularLocation>
        <location evidence="1">Cytoplasm</location>
    </subcellularLocation>
</comment>
<comment type="similarity">
    <text evidence="1">Belongs to the methylthiotransferase family. RimO subfamily.</text>
</comment>
<keyword id="KW-0004">4Fe-4S</keyword>
<keyword id="KW-0963">Cytoplasm</keyword>
<keyword id="KW-0408">Iron</keyword>
<keyword id="KW-0411">Iron-sulfur</keyword>
<keyword id="KW-0479">Metal-binding</keyword>
<keyword id="KW-0949">S-adenosyl-L-methionine</keyword>
<keyword id="KW-0808">Transferase</keyword>
<reference key="1">
    <citation type="submission" date="2008-02" db="EMBL/GenBank/DDBJ databases">
        <title>Complete sequence of Haemophilus somnus 2336.</title>
        <authorList>
            <consortium name="US DOE Joint Genome Institute"/>
            <person name="Siddaramappa S."/>
            <person name="Duncan A.J."/>
            <person name="Challacombe J.F."/>
            <person name="Rainey D."/>
            <person name="Gillaspy A.F."/>
            <person name="Carson M."/>
            <person name="Gipson J."/>
            <person name="Gipson M."/>
            <person name="Bruce D."/>
            <person name="Detter J.C."/>
            <person name="Han C.S."/>
            <person name="Land M."/>
            <person name="Tapia R."/>
            <person name="Thompson L.S."/>
            <person name="Orvis J."/>
            <person name="Zaitshik J."/>
            <person name="Barnes G."/>
            <person name="Brettin T.S."/>
            <person name="Dyer D.W."/>
            <person name="Inzana T.J."/>
        </authorList>
    </citation>
    <scope>NUCLEOTIDE SEQUENCE [LARGE SCALE GENOMIC DNA]</scope>
    <source>
        <strain>2336</strain>
    </source>
</reference>